<accession>Q18J48</accession>
<proteinExistence type="inferred from homology"/>
<dbReference type="EMBL" id="AM180088">
    <property type="protein sequence ID" value="CAJ51963.1"/>
    <property type="molecule type" value="Genomic_DNA"/>
</dbReference>
<dbReference type="RefSeq" id="WP_011571111.1">
    <property type="nucleotide sequence ID" value="NC_008212.1"/>
</dbReference>
<dbReference type="SMR" id="Q18J48"/>
<dbReference type="STRING" id="362976.HQ_1835A"/>
<dbReference type="GeneID" id="4193799"/>
<dbReference type="KEGG" id="hwa:HQ_1835A"/>
<dbReference type="eggNOG" id="arCOG02248">
    <property type="taxonomic scope" value="Archaea"/>
</dbReference>
<dbReference type="HOGENOM" id="CLU_052508_3_0_2"/>
<dbReference type="UniPathway" id="UPA00148"/>
<dbReference type="Proteomes" id="UP000001975">
    <property type="component" value="Chromosome"/>
</dbReference>
<dbReference type="GO" id="GO:0043190">
    <property type="term" value="C:ATP-binding cassette (ABC) transporter complex"/>
    <property type="evidence" value="ECO:0007669"/>
    <property type="project" value="InterPro"/>
</dbReference>
<dbReference type="GO" id="GO:0015087">
    <property type="term" value="F:cobalt ion transmembrane transporter activity"/>
    <property type="evidence" value="ECO:0007669"/>
    <property type="project" value="UniProtKB-UniRule"/>
</dbReference>
<dbReference type="GO" id="GO:0009236">
    <property type="term" value="P:cobalamin biosynthetic process"/>
    <property type="evidence" value="ECO:0007669"/>
    <property type="project" value="UniProtKB-UniRule"/>
</dbReference>
<dbReference type="FunFam" id="1.10.1760.20:FF:000001">
    <property type="entry name" value="Cobalt transport protein CbiM"/>
    <property type="match status" value="1"/>
</dbReference>
<dbReference type="Gene3D" id="1.10.1760.20">
    <property type="match status" value="1"/>
</dbReference>
<dbReference type="HAMAP" id="MF_01462">
    <property type="entry name" value="CbiM"/>
    <property type="match status" value="1"/>
</dbReference>
<dbReference type="InterPro" id="IPR018024">
    <property type="entry name" value="CbiM"/>
</dbReference>
<dbReference type="InterPro" id="IPR002751">
    <property type="entry name" value="CbiM/NikMN"/>
</dbReference>
<dbReference type="NCBIfam" id="TIGR00123">
    <property type="entry name" value="cbiM"/>
    <property type="match status" value="1"/>
</dbReference>
<dbReference type="NCBIfam" id="NF006184">
    <property type="entry name" value="PRK08319.1"/>
    <property type="match status" value="1"/>
</dbReference>
<dbReference type="PANTHER" id="PTHR43627">
    <property type="match status" value="1"/>
</dbReference>
<dbReference type="PANTHER" id="PTHR43627:SF1">
    <property type="entry name" value="COBALT TRANSPORT PROTEIN CBIM"/>
    <property type="match status" value="1"/>
</dbReference>
<dbReference type="Pfam" id="PF01891">
    <property type="entry name" value="CbiM"/>
    <property type="match status" value="1"/>
</dbReference>
<protein>
    <recommendedName>
        <fullName evidence="1">Putative cobalt transport protein CbiM</fullName>
    </recommendedName>
    <alternativeName>
        <fullName evidence="1">Energy-coupling factor transporter probable substrate-capture protein CbiM</fullName>
        <shortName evidence="1">ECF transporter S component CbiM</shortName>
    </alternativeName>
</protein>
<comment type="function">
    <text evidence="1">Part of the energy-coupling factor (ECF) transporter complex CbiMNOQ involved in cobalt import.</text>
</comment>
<comment type="pathway">
    <text evidence="1">Cofactor biosynthesis; adenosylcobalamin biosynthesis.</text>
</comment>
<comment type="subunit">
    <text evidence="1">Forms an energy-coupling factor (ECF) transporter complex composed of an ATP-binding protein (A component, CbiO), a transmembrane protein (T component, CbiQ) and 2 possible substrate-capture proteins (S components, CbiM and CbiN) of unknown stoichimetry.</text>
</comment>
<comment type="subcellular location">
    <subcellularLocation>
        <location evidence="1">Cell membrane</location>
        <topology evidence="1">Multi-pass membrane protein</topology>
    </subcellularLocation>
</comment>
<comment type="similarity">
    <text evidence="1">Belongs to the CbiM family.</text>
</comment>
<keyword id="KW-1003">Cell membrane</keyword>
<keyword id="KW-0169">Cobalamin biosynthesis</keyword>
<keyword id="KW-0170">Cobalt</keyword>
<keyword id="KW-0171">Cobalt transport</keyword>
<keyword id="KW-0406">Ion transport</keyword>
<keyword id="KW-0472">Membrane</keyword>
<keyword id="KW-1185">Reference proteome</keyword>
<keyword id="KW-0812">Transmembrane</keyword>
<keyword id="KW-1133">Transmembrane helix</keyword>
<keyword id="KW-0813">Transport</keyword>
<sequence length="220" mass="22953">MHIMEGFLPPRWAAAWTLAAAPIVVYGAKQTIDIIRQDARVKALVAIGIAFVFILSALKFPSVTGSTSHPTGTGLLVVLFGPAVTAFTATIVLLYQALLLAHGGITTLGANVVAMGIIGPTVGWTAYQIIRPYTSLERATFIAAVLTDWTTYLVTSLQLGAAFPAGDGLDAIIISALDFAAIFTLTQVPIGILEGILAAAVIGYLTRLGSETIESLEVAA</sequence>
<name>CBIM_HALWD</name>
<feature type="chain" id="PRO_0000411153" description="Putative cobalt transport protein CbiM">
    <location>
        <begin position="1"/>
        <end position="220"/>
    </location>
</feature>
<feature type="transmembrane region" description="Helical" evidence="1">
    <location>
        <begin position="6"/>
        <end position="26"/>
    </location>
</feature>
<feature type="transmembrane region" description="Helical" evidence="1">
    <location>
        <begin position="43"/>
        <end position="63"/>
    </location>
</feature>
<feature type="transmembrane region" description="Helical" evidence="1">
    <location>
        <begin position="74"/>
        <end position="94"/>
    </location>
</feature>
<feature type="transmembrane region" description="Helical" evidence="1">
    <location>
        <begin position="98"/>
        <end position="118"/>
    </location>
</feature>
<feature type="transmembrane region" description="Helical" evidence="1">
    <location>
        <begin position="182"/>
        <end position="202"/>
    </location>
</feature>
<gene>
    <name evidence="1" type="primary">cbiM</name>
    <name type="ordered locus">HQ_1835A</name>
</gene>
<reference key="1">
    <citation type="journal article" date="2006" name="BMC Genomics">
        <title>The genome of the square archaeon Haloquadratum walsbyi: life at the limits of water activity.</title>
        <authorList>
            <person name="Bolhuis H."/>
            <person name="Palm P."/>
            <person name="Wende A."/>
            <person name="Falb M."/>
            <person name="Rampp M."/>
            <person name="Rodriguez-Valera F."/>
            <person name="Pfeiffer F."/>
            <person name="Oesterhelt D."/>
        </authorList>
    </citation>
    <scope>NUCLEOTIDE SEQUENCE [LARGE SCALE GENOMIC DNA]</scope>
    <source>
        <strain>DSM 16790 / HBSQ001</strain>
    </source>
</reference>
<evidence type="ECO:0000255" key="1">
    <source>
        <dbReference type="HAMAP-Rule" id="MF_01462"/>
    </source>
</evidence>
<organism>
    <name type="scientific">Haloquadratum walsbyi (strain DSM 16790 / HBSQ001)</name>
    <dbReference type="NCBI Taxonomy" id="362976"/>
    <lineage>
        <taxon>Archaea</taxon>
        <taxon>Methanobacteriati</taxon>
        <taxon>Methanobacteriota</taxon>
        <taxon>Stenosarchaea group</taxon>
        <taxon>Halobacteria</taxon>
        <taxon>Halobacteriales</taxon>
        <taxon>Haloferacaceae</taxon>
        <taxon>Haloquadratum</taxon>
    </lineage>
</organism>